<protein>
    <recommendedName>
        <fullName>Squalene epoxidase 1</fullName>
        <shortName>AtSQE1</shortName>
        <ecNumber evidence="3">1.14.14.17</ecNumber>
    </recommendedName>
    <alternativeName>
        <fullName>Protein DROUGHT HYPERSENSITIVE 2</fullName>
    </alternativeName>
    <alternativeName>
        <fullName>Squalene monooxygenase</fullName>
    </alternativeName>
    <alternativeName>
        <fullName>XF1 protein</fullName>
    </alternativeName>
</protein>
<dbReference type="EC" id="1.14.14.17" evidence="3"/>
<dbReference type="EMBL" id="AB008021">
    <property type="protein sequence ID" value="BAA88268.1"/>
    <property type="molecule type" value="mRNA"/>
</dbReference>
<dbReference type="EMBL" id="AB077822">
    <property type="protein sequence ID" value="BAB83875.1"/>
    <property type="molecule type" value="Genomic_DNA"/>
</dbReference>
<dbReference type="EMBL" id="AC082643">
    <property type="protein sequence ID" value="AAG50645.1"/>
    <property type="status" value="ALT_SEQ"/>
    <property type="molecule type" value="Genomic_DNA"/>
</dbReference>
<dbReference type="EMBL" id="CP002684">
    <property type="protein sequence ID" value="AEE33549.1"/>
    <property type="molecule type" value="Genomic_DNA"/>
</dbReference>
<dbReference type="EMBL" id="JN389445">
    <property type="protein sequence ID" value="AEM36345.1"/>
    <property type="status" value="ALT_SEQ"/>
    <property type="molecule type" value="Genomic_DNA"/>
</dbReference>
<dbReference type="EMBL" id="AY099643">
    <property type="protein sequence ID" value="AAM20494.1"/>
    <property type="molecule type" value="mRNA"/>
</dbReference>
<dbReference type="EMBL" id="BT000239">
    <property type="protein sequence ID" value="AAN15558.1"/>
    <property type="molecule type" value="mRNA"/>
</dbReference>
<dbReference type="PIR" id="C96618">
    <property type="entry name" value="C96618"/>
</dbReference>
<dbReference type="PIR" id="T52462">
    <property type="entry name" value="T52462"/>
</dbReference>
<dbReference type="RefSeq" id="NP_564734.1">
    <property type="nucleotide sequence ID" value="NM_104624.4"/>
</dbReference>
<dbReference type="SMR" id="Q9SM02"/>
<dbReference type="FunCoup" id="Q9SM02">
    <property type="interactions" value="945"/>
</dbReference>
<dbReference type="STRING" id="3702.Q9SM02"/>
<dbReference type="GlyGen" id="Q9SM02">
    <property type="glycosylation" value="1 site"/>
</dbReference>
<dbReference type="iPTMnet" id="Q9SM02"/>
<dbReference type="PaxDb" id="3702-AT1G58440.1"/>
<dbReference type="ProteomicsDB" id="220573"/>
<dbReference type="EnsemblPlants" id="AT1G58440.1">
    <property type="protein sequence ID" value="AT1G58440.1"/>
    <property type="gene ID" value="AT1G58440"/>
</dbReference>
<dbReference type="GeneID" id="842213"/>
<dbReference type="Gramene" id="AT1G58440.1">
    <property type="protein sequence ID" value="AT1G58440.1"/>
    <property type="gene ID" value="AT1G58440"/>
</dbReference>
<dbReference type="KEGG" id="ath:AT1G58440"/>
<dbReference type="Araport" id="AT1G58440"/>
<dbReference type="TAIR" id="AT1G58440">
    <property type="gene designation" value="XF1"/>
</dbReference>
<dbReference type="eggNOG" id="KOG1298">
    <property type="taxonomic scope" value="Eukaryota"/>
</dbReference>
<dbReference type="HOGENOM" id="CLU_026390_1_0_1"/>
<dbReference type="InParanoid" id="Q9SM02"/>
<dbReference type="OMA" id="AKRTFYW"/>
<dbReference type="PhylomeDB" id="Q9SM02"/>
<dbReference type="BioCyc" id="ARA:AT1G58440-MONOMER"/>
<dbReference type="BioCyc" id="MetaCyc:AT1G58440-MONOMER"/>
<dbReference type="BRENDA" id="1.14.14.17">
    <property type="organism ID" value="399"/>
</dbReference>
<dbReference type="UniPathway" id="UPA00767">
    <property type="reaction ID" value="UER00752"/>
</dbReference>
<dbReference type="PRO" id="PR:Q9SM02"/>
<dbReference type="Proteomes" id="UP000006548">
    <property type="component" value="Chromosome 1"/>
</dbReference>
<dbReference type="ExpressionAtlas" id="Q9SM02">
    <property type="expression patterns" value="baseline and differential"/>
</dbReference>
<dbReference type="GO" id="GO:0016020">
    <property type="term" value="C:membrane"/>
    <property type="evidence" value="ECO:0007669"/>
    <property type="project" value="UniProtKB-SubCell"/>
</dbReference>
<dbReference type="GO" id="GO:0050660">
    <property type="term" value="F:flavin adenine dinucleotide binding"/>
    <property type="evidence" value="ECO:0007669"/>
    <property type="project" value="InterPro"/>
</dbReference>
<dbReference type="GO" id="GO:0004506">
    <property type="term" value="F:squalene monooxygenase activity"/>
    <property type="evidence" value="ECO:0007669"/>
    <property type="project" value="UniProtKB-EC"/>
</dbReference>
<dbReference type="GO" id="GO:0009723">
    <property type="term" value="P:response to ethylene"/>
    <property type="evidence" value="ECO:0000270"/>
    <property type="project" value="TAIR"/>
</dbReference>
<dbReference type="GO" id="GO:0009414">
    <property type="term" value="P:response to water deprivation"/>
    <property type="evidence" value="ECO:0000315"/>
    <property type="project" value="TAIR"/>
</dbReference>
<dbReference type="GO" id="GO:0016126">
    <property type="term" value="P:sterol biosynthetic process"/>
    <property type="evidence" value="ECO:0000315"/>
    <property type="project" value="TAIR"/>
</dbReference>
<dbReference type="FunFam" id="3.50.50.60:FF:000074">
    <property type="entry name" value="Squalene monooxygenase 2"/>
    <property type="match status" value="1"/>
</dbReference>
<dbReference type="Gene3D" id="3.50.50.60">
    <property type="entry name" value="FAD/NAD(P)-binding domain"/>
    <property type="match status" value="1"/>
</dbReference>
<dbReference type="InterPro" id="IPR036188">
    <property type="entry name" value="FAD/NAD-bd_sf"/>
</dbReference>
<dbReference type="InterPro" id="IPR013698">
    <property type="entry name" value="Squalene_epoxidase"/>
</dbReference>
<dbReference type="InterPro" id="IPR040125">
    <property type="entry name" value="Squalene_monox"/>
</dbReference>
<dbReference type="PANTHER" id="PTHR10835">
    <property type="entry name" value="SQUALENE MONOOXYGENASE"/>
    <property type="match status" value="1"/>
</dbReference>
<dbReference type="PANTHER" id="PTHR10835:SF0">
    <property type="entry name" value="SQUALENE MONOOXYGENASE"/>
    <property type="match status" value="1"/>
</dbReference>
<dbReference type="Pfam" id="PF13450">
    <property type="entry name" value="NAD_binding_8"/>
    <property type="match status" value="1"/>
</dbReference>
<dbReference type="Pfam" id="PF08491">
    <property type="entry name" value="SE"/>
    <property type="match status" value="1"/>
</dbReference>
<dbReference type="PRINTS" id="PR00420">
    <property type="entry name" value="RNGMNOXGNASE"/>
</dbReference>
<dbReference type="SUPFAM" id="SSF51905">
    <property type="entry name" value="FAD/NAD(P)-binding domain"/>
    <property type="match status" value="1"/>
</dbReference>
<reference key="1">
    <citation type="journal article" date="1999" name="Gene">
        <title>Isolation and analysis of cDNA within a 300 kb Arabidopsis thaliana genomic region located around the 100 map unit of chromosome 1.</title>
        <authorList>
            <person name="Kato A."/>
            <person name="Suzuki M."/>
            <person name="Kuwahara A."/>
            <person name="Ooe H."/>
            <person name="Higano-Inaba K."/>
            <person name="Komeda Y."/>
        </authorList>
    </citation>
    <scope>NUCLEOTIDE SEQUENCE [GENOMIC DNA / MRNA]</scope>
</reference>
<reference key="2">
    <citation type="journal article" date="2000" name="Nature">
        <title>Sequence and analysis of chromosome 1 of the plant Arabidopsis thaliana.</title>
        <authorList>
            <person name="Theologis A."/>
            <person name="Ecker J.R."/>
            <person name="Palm C.J."/>
            <person name="Federspiel N.A."/>
            <person name="Kaul S."/>
            <person name="White O."/>
            <person name="Alonso J."/>
            <person name="Altafi H."/>
            <person name="Araujo R."/>
            <person name="Bowman C.L."/>
            <person name="Brooks S.Y."/>
            <person name="Buehler E."/>
            <person name="Chan A."/>
            <person name="Chao Q."/>
            <person name="Chen H."/>
            <person name="Cheuk R.F."/>
            <person name="Chin C.W."/>
            <person name="Chung M.K."/>
            <person name="Conn L."/>
            <person name="Conway A.B."/>
            <person name="Conway A.R."/>
            <person name="Creasy T.H."/>
            <person name="Dewar K."/>
            <person name="Dunn P."/>
            <person name="Etgu P."/>
            <person name="Feldblyum T.V."/>
            <person name="Feng J.-D."/>
            <person name="Fong B."/>
            <person name="Fujii C.Y."/>
            <person name="Gill J.E."/>
            <person name="Goldsmith A.D."/>
            <person name="Haas B."/>
            <person name="Hansen N.F."/>
            <person name="Hughes B."/>
            <person name="Huizar L."/>
            <person name="Hunter J.L."/>
            <person name="Jenkins J."/>
            <person name="Johnson-Hopson C."/>
            <person name="Khan S."/>
            <person name="Khaykin E."/>
            <person name="Kim C.J."/>
            <person name="Koo H.L."/>
            <person name="Kremenetskaia I."/>
            <person name="Kurtz D.B."/>
            <person name="Kwan A."/>
            <person name="Lam B."/>
            <person name="Langin-Hooper S."/>
            <person name="Lee A."/>
            <person name="Lee J.M."/>
            <person name="Lenz C.A."/>
            <person name="Li J.H."/>
            <person name="Li Y.-P."/>
            <person name="Lin X."/>
            <person name="Liu S.X."/>
            <person name="Liu Z.A."/>
            <person name="Luros J.S."/>
            <person name="Maiti R."/>
            <person name="Marziali A."/>
            <person name="Militscher J."/>
            <person name="Miranda M."/>
            <person name="Nguyen M."/>
            <person name="Nierman W.C."/>
            <person name="Osborne B.I."/>
            <person name="Pai G."/>
            <person name="Peterson J."/>
            <person name="Pham P.K."/>
            <person name="Rizzo M."/>
            <person name="Rooney T."/>
            <person name="Rowley D."/>
            <person name="Sakano H."/>
            <person name="Salzberg S.L."/>
            <person name="Schwartz J.R."/>
            <person name="Shinn P."/>
            <person name="Southwick A.M."/>
            <person name="Sun H."/>
            <person name="Tallon L.J."/>
            <person name="Tambunga G."/>
            <person name="Toriumi M.J."/>
            <person name="Town C.D."/>
            <person name="Utterback T."/>
            <person name="Van Aken S."/>
            <person name="Vaysberg M."/>
            <person name="Vysotskaia V.S."/>
            <person name="Walker M."/>
            <person name="Wu D."/>
            <person name="Yu G."/>
            <person name="Fraser C.M."/>
            <person name="Venter J.C."/>
            <person name="Davis R.W."/>
        </authorList>
    </citation>
    <scope>NUCLEOTIDE SEQUENCE [LARGE SCALE GENOMIC DNA]</scope>
    <source>
        <strain>cv. Columbia</strain>
    </source>
</reference>
<reference key="3">
    <citation type="journal article" date="2017" name="Plant J.">
        <title>Araport11: a complete reannotation of the Arabidopsis thaliana reference genome.</title>
        <authorList>
            <person name="Cheng C.Y."/>
            <person name="Krishnakumar V."/>
            <person name="Chan A.P."/>
            <person name="Thibaud-Nissen F."/>
            <person name="Schobel S."/>
            <person name="Town C.D."/>
        </authorList>
    </citation>
    <scope>GENOME REANNOTATION</scope>
    <source>
        <strain>cv. Columbia</strain>
    </source>
</reference>
<reference key="4">
    <citation type="journal article" date="2011" name="Plant Physiol.">
        <title>Genome-wide comparison of nucleotide-binding site-leucine-rich repeat-encoding genes in Arabidopsis.</title>
        <authorList>
            <person name="Guo Y.-L."/>
            <person name="Fitz J."/>
            <person name="Schneeberger K."/>
            <person name="Ossowski S."/>
            <person name="Cao J."/>
            <person name="Weigel D."/>
        </authorList>
    </citation>
    <scope>NUCLEOTIDE SEQUENCE [LARGE SCALE GENOMIC DNA]</scope>
</reference>
<reference key="5">
    <citation type="journal article" date="2003" name="Science">
        <title>Empirical analysis of transcriptional activity in the Arabidopsis genome.</title>
        <authorList>
            <person name="Yamada K."/>
            <person name="Lim J."/>
            <person name="Dale J.M."/>
            <person name="Chen H."/>
            <person name="Shinn P."/>
            <person name="Palm C.J."/>
            <person name="Southwick A.M."/>
            <person name="Wu H.C."/>
            <person name="Kim C.J."/>
            <person name="Nguyen M."/>
            <person name="Pham P.K."/>
            <person name="Cheuk R.F."/>
            <person name="Karlin-Newmann G."/>
            <person name="Liu S.X."/>
            <person name="Lam B."/>
            <person name="Sakano H."/>
            <person name="Wu T."/>
            <person name="Yu G."/>
            <person name="Miranda M."/>
            <person name="Quach H.L."/>
            <person name="Tripp M."/>
            <person name="Chang C.H."/>
            <person name="Lee J.M."/>
            <person name="Toriumi M.J."/>
            <person name="Chan M.M."/>
            <person name="Tang C.C."/>
            <person name="Onodera C.S."/>
            <person name="Deng J.M."/>
            <person name="Akiyama K."/>
            <person name="Ansari Y."/>
            <person name="Arakawa T."/>
            <person name="Banh J."/>
            <person name="Banno F."/>
            <person name="Bowser L."/>
            <person name="Brooks S.Y."/>
            <person name="Carninci P."/>
            <person name="Chao Q."/>
            <person name="Choy N."/>
            <person name="Enju A."/>
            <person name="Goldsmith A.D."/>
            <person name="Gurjal M."/>
            <person name="Hansen N.F."/>
            <person name="Hayashizaki Y."/>
            <person name="Johnson-Hopson C."/>
            <person name="Hsuan V.W."/>
            <person name="Iida K."/>
            <person name="Karnes M."/>
            <person name="Khan S."/>
            <person name="Koesema E."/>
            <person name="Ishida J."/>
            <person name="Jiang P.X."/>
            <person name="Jones T."/>
            <person name="Kawai J."/>
            <person name="Kamiya A."/>
            <person name="Meyers C."/>
            <person name="Nakajima M."/>
            <person name="Narusaka M."/>
            <person name="Seki M."/>
            <person name="Sakurai T."/>
            <person name="Satou M."/>
            <person name="Tamse R."/>
            <person name="Vaysberg M."/>
            <person name="Wallender E.K."/>
            <person name="Wong C."/>
            <person name="Yamamura Y."/>
            <person name="Yuan S."/>
            <person name="Shinozaki K."/>
            <person name="Davis R.W."/>
            <person name="Theologis A."/>
            <person name="Ecker J.R."/>
        </authorList>
    </citation>
    <scope>NUCLEOTIDE SEQUENCE [LARGE SCALE MRNA]</scope>
    <source>
        <strain>cv. Columbia</strain>
    </source>
</reference>
<reference key="6">
    <citation type="journal article" date="2007" name="J. Biol. Chem.">
        <title>Arabidopsis thaliana squalene epoxidase 1 is essential for root and seed development.</title>
        <authorList>
            <person name="Rasbery J.M."/>
            <person name="Shan H."/>
            <person name="LeClair R.J."/>
            <person name="Norman M."/>
            <person name="Matsuda S.P."/>
            <person name="Bartel B."/>
        </authorList>
    </citation>
    <scope>IDENTIFICATION</scope>
    <scope>FUNCTION</scope>
    <scope>CATALYTIC ACTIVITY</scope>
    <scope>TISSUE SPECIFICITY</scope>
    <scope>DISRUPTION PHENOTYPE</scope>
    <scope>GENE FAMILY</scope>
    <scope>NOMENCLATURE</scope>
</reference>
<reference key="7">
    <citation type="journal article" date="2009" name="Plant J.">
        <title>Identification of the Arabidopsis dry2/sqe1-5 mutant reveals a central role for sterols in drought tolerance and regulation of reactive oxygen species.</title>
        <authorList>
            <person name="Pose D."/>
            <person name="Castanedo I."/>
            <person name="Borsani O."/>
            <person name="Nieto B."/>
            <person name="Rosado A."/>
            <person name="Taconnat L."/>
            <person name="Ferrer A."/>
            <person name="Dolan L."/>
            <person name="Valpuesta V."/>
            <person name="Botella M.A."/>
        </authorList>
    </citation>
    <scope>FUNCTION</scope>
    <scope>MUTAGENESIS OF GLY-183</scope>
    <scope>TISSUE SPECIFICITY</scope>
    <source>
        <strain>cv. Landsberg erecta</strain>
    </source>
</reference>
<reference key="8">
    <citation type="journal article" date="2009" name="Plant Signal. Behav.">
        <title>Analysis of the arabidopsis dry2/sqe1-5 mutant suggests a role for sterols in signaling.</title>
        <authorList>
            <person name="Pose D."/>
            <person name="Botella M.A."/>
        </authorList>
    </citation>
    <scope>FUNCTION</scope>
</reference>
<name>ERG14_ARATH</name>
<sequence length="531" mass="58175">MESQLWNWILPLLISSLLISFVAFYGFFVKPKRNGLRHDRKTVSTVTSDVGSVNITGDTVADVIVVGAGVAGSALAYTLGKDKRRVHVIERDLSEPDRIVGELLQPGGYLKLLELGIEDCVEEIDAQRVYGYALFKNGKRIRLAYPLEKFHEDVSGRSFHNGRFIQRMREKAASLPNVQLEQGTVLSLLEENGTIKGVRYKNKAGEEQTAFAALTIVCDGCFSNLRRSLCNPQVEVPSCFVGLVLENCNLPYANHGHVVLADPSPILMYPISSTEVRCLVDVPGQKVPSIANGEMKNYLKTVVAPQMPHEVYDSFIAAVDKGNIKSMPNRSMPASPYPTPGALLMGDAFNMRHPLTGGGMTVALADIVVLRNLLRPLRDLSDGASLCKYLESFYTLRKPVAATINTLANALYQVFCSSENEARNEMREACFDYLGLGGMCTSGPVSLLSGLNPRPLTLVCHFFAVAVYGVIRLLIPFPSPKRIWLGAKLISGASGIIFPIIKAEGVRQMFFPATVPAYYYKAPTVGETKCS</sequence>
<keyword id="KW-0274">FAD</keyword>
<keyword id="KW-0285">Flavoprotein</keyword>
<keyword id="KW-0472">Membrane</keyword>
<keyword id="KW-0560">Oxidoreductase</keyword>
<keyword id="KW-1185">Reference proteome</keyword>
<keyword id="KW-0812">Transmembrane</keyword>
<keyword id="KW-1133">Transmembrane helix</keyword>
<proteinExistence type="evidence at protein level"/>
<gene>
    <name type="primary">SQE1</name>
    <name type="synonym">DRY2</name>
    <name type="synonym">XF1</name>
    <name type="ordered locus">At1g58440</name>
    <name type="ORF">F9K23.3</name>
</gene>
<feature type="chain" id="PRO_0000422763" description="Squalene epoxidase 1">
    <location>
        <begin position="1"/>
        <end position="531"/>
    </location>
</feature>
<feature type="transmembrane region" description="Helical" evidence="2">
    <location>
        <begin position="9"/>
        <end position="29"/>
    </location>
</feature>
<feature type="transmembrane region" description="Helical" evidence="2">
    <location>
        <begin position="458"/>
        <end position="478"/>
    </location>
</feature>
<feature type="transmembrane region" description="Helical" evidence="2">
    <location>
        <begin position="483"/>
        <end position="503"/>
    </location>
</feature>
<feature type="binding site" evidence="1">
    <location>
        <begin position="70"/>
        <end position="71"/>
    </location>
    <ligand>
        <name>FAD</name>
        <dbReference type="ChEBI" id="CHEBI:57692"/>
    </ligand>
</feature>
<feature type="binding site" evidence="1">
    <location>
        <begin position="90"/>
        <end position="91"/>
    </location>
    <ligand>
        <name>FAD</name>
        <dbReference type="ChEBI" id="CHEBI:57692"/>
    </ligand>
</feature>
<feature type="binding site" evidence="1">
    <location>
        <position position="98"/>
    </location>
    <ligand>
        <name>FAD</name>
        <dbReference type="ChEBI" id="CHEBI:57692"/>
    </ligand>
</feature>
<feature type="binding site" evidence="1">
    <location>
        <position position="169"/>
    </location>
    <ligand>
        <name>FAD</name>
        <dbReference type="ChEBI" id="CHEBI:57692"/>
    </ligand>
</feature>
<feature type="binding site" evidence="1">
    <location>
        <position position="185"/>
    </location>
    <ligand>
        <name>FAD</name>
        <dbReference type="ChEBI" id="CHEBI:57692"/>
    </ligand>
</feature>
<feature type="binding site" evidence="1">
    <location>
        <position position="347"/>
    </location>
    <ligand>
        <name>FAD</name>
        <dbReference type="ChEBI" id="CHEBI:57692"/>
    </ligand>
</feature>
<feature type="binding site" evidence="1">
    <location>
        <position position="360"/>
    </location>
    <ligand>
        <name>FAD</name>
        <dbReference type="ChEBI" id="CHEBI:57692"/>
    </ligand>
</feature>
<feature type="site" description="Important for enzyme activity" evidence="1">
    <location>
        <position position="132"/>
    </location>
</feature>
<feature type="mutagenesis site" description="In dry2/seq1-5; extreme sensitivity to dehydration and ectopic localization of RHD2 NADPH oxidase and ROS production." evidence="4">
    <original>G</original>
    <variation>R</variation>
    <location>
        <position position="183"/>
    </location>
</feature>
<comment type="function">
    <text evidence="3 4 5">Catalyzes the stereospecific oxidation of squalene to (S)-2,3-epoxysqualene, and is considered to be a rate-limiting enzyme in steroid biosynthesis. Can produce not only oxidosqualene, but also 2,3:22,23-dioxidosqualene. Main squalene epoxidase in the root. Sqe1 mutants may show defects in membrane lipid rafts, impairing the correct localization of RHD2 NADPH oxidase and the proper polarized production of ROS.</text>
</comment>
<comment type="catalytic activity">
    <reaction evidence="3">
        <text>squalene + reduced [NADPH--hemoprotein reductase] + O2 = (S)-2,3-epoxysqualene + oxidized [NADPH--hemoprotein reductase] + H2O + H(+)</text>
        <dbReference type="Rhea" id="RHEA:25282"/>
        <dbReference type="Rhea" id="RHEA-COMP:11964"/>
        <dbReference type="Rhea" id="RHEA-COMP:11965"/>
        <dbReference type="ChEBI" id="CHEBI:15377"/>
        <dbReference type="ChEBI" id="CHEBI:15378"/>
        <dbReference type="ChEBI" id="CHEBI:15379"/>
        <dbReference type="ChEBI" id="CHEBI:15440"/>
        <dbReference type="ChEBI" id="CHEBI:15441"/>
        <dbReference type="ChEBI" id="CHEBI:57618"/>
        <dbReference type="ChEBI" id="CHEBI:58210"/>
        <dbReference type="EC" id="1.14.14.17"/>
    </reaction>
</comment>
<comment type="cofactor">
    <cofactor evidence="1">
        <name>FAD</name>
        <dbReference type="ChEBI" id="CHEBI:57692"/>
    </cofactor>
</comment>
<comment type="pathway">
    <text>Terpene metabolism; lanosterol biosynthesis; lanosterol from farnesyl diphosphate: step 2/3.</text>
</comment>
<comment type="subcellular location">
    <subcellularLocation>
        <location evidence="6">Membrane</location>
        <topology evidence="6">Multi-pass membrane protein</topology>
    </subcellularLocation>
</comment>
<comment type="tissue specificity">
    <text evidence="3 4">Expressed in seedlings, leaves, stems, inflorescences, sepals, style and siliques. Expressed in expanded cotyledons, root tips and cortical cells of the root elongation zone, but not in root hair cells. In leaves, expressed in most cells, with a very strong expression in stomata.</text>
</comment>
<comment type="disruption phenotype">
    <text evidence="3">Non viable, sterile dwarf plants with short, highly branched roots.</text>
</comment>
<comment type="miscellaneous">
    <text evidence="7">SEQ4 or SEQ5 are unable to complement seq1 mutants.</text>
</comment>
<comment type="similarity">
    <text evidence="6">Belongs to the squalene monooxygenase family.</text>
</comment>
<comment type="sequence caution" evidence="6">
    <conflict type="erroneous gene model prediction">
        <sequence resource="EMBL-CDS" id="AAG50645"/>
    </conflict>
</comment>
<comment type="sequence caution" evidence="6">
    <conflict type="erroneous gene model prediction">
        <sequence resource="EMBL-CDS" id="AEM36345"/>
    </conflict>
</comment>
<evidence type="ECO:0000250" key="1">
    <source>
        <dbReference type="UniProtKB" id="Q14534"/>
    </source>
</evidence>
<evidence type="ECO:0000255" key="2"/>
<evidence type="ECO:0000269" key="3">
    <source>
    </source>
</evidence>
<evidence type="ECO:0000269" key="4">
    <source>
    </source>
</evidence>
<evidence type="ECO:0000269" key="5">
    <source>
    </source>
</evidence>
<evidence type="ECO:0000305" key="6"/>
<evidence type="ECO:0000305" key="7">
    <source>
    </source>
</evidence>
<accession>Q9SM02</accession>
<accession>G1JSH7</accession>
<accession>Q9C649</accession>
<organism>
    <name type="scientific">Arabidopsis thaliana</name>
    <name type="common">Mouse-ear cress</name>
    <dbReference type="NCBI Taxonomy" id="3702"/>
    <lineage>
        <taxon>Eukaryota</taxon>
        <taxon>Viridiplantae</taxon>
        <taxon>Streptophyta</taxon>
        <taxon>Embryophyta</taxon>
        <taxon>Tracheophyta</taxon>
        <taxon>Spermatophyta</taxon>
        <taxon>Magnoliopsida</taxon>
        <taxon>eudicotyledons</taxon>
        <taxon>Gunneridae</taxon>
        <taxon>Pentapetalae</taxon>
        <taxon>rosids</taxon>
        <taxon>malvids</taxon>
        <taxon>Brassicales</taxon>
        <taxon>Brassicaceae</taxon>
        <taxon>Camelineae</taxon>
        <taxon>Arabidopsis</taxon>
    </lineage>
</organism>